<accession>P41918</accession>
<keyword id="KW-0342">GTP-binding</keyword>
<keyword id="KW-0547">Nucleotide-binding</keyword>
<keyword id="KW-0539">Nucleus</keyword>
<keyword id="KW-0653">Protein transport</keyword>
<keyword id="KW-1185">Reference proteome</keyword>
<keyword id="KW-0813">Transport</keyword>
<dbReference type="EMBL" id="L16767">
    <property type="protein sequence ID" value="AAA73563.1"/>
    <property type="molecule type" value="mRNA"/>
</dbReference>
<dbReference type="RefSeq" id="NP_001313164.1">
    <property type="nucleotide sequence ID" value="NM_001326235.1"/>
</dbReference>
<dbReference type="RefSeq" id="XP_016512880.1">
    <property type="nucleotide sequence ID" value="XM_016657394.1"/>
</dbReference>
<dbReference type="SMR" id="P41918"/>
<dbReference type="STRING" id="4097.P41918"/>
<dbReference type="PaxDb" id="4097-P41918"/>
<dbReference type="GeneID" id="107829920"/>
<dbReference type="KEGG" id="nta:107829920"/>
<dbReference type="OMA" id="NACGVEN"/>
<dbReference type="OrthoDB" id="2012850at2759"/>
<dbReference type="PhylomeDB" id="P41918"/>
<dbReference type="Proteomes" id="UP000084051">
    <property type="component" value="Unplaced"/>
</dbReference>
<dbReference type="GO" id="GO:0005737">
    <property type="term" value="C:cytoplasm"/>
    <property type="evidence" value="ECO:0000318"/>
    <property type="project" value="GO_Central"/>
</dbReference>
<dbReference type="GO" id="GO:0005634">
    <property type="term" value="C:nucleus"/>
    <property type="evidence" value="ECO:0000318"/>
    <property type="project" value="GO_Central"/>
</dbReference>
<dbReference type="GO" id="GO:0005525">
    <property type="term" value="F:GTP binding"/>
    <property type="evidence" value="ECO:0007669"/>
    <property type="project" value="UniProtKB-KW"/>
</dbReference>
<dbReference type="GO" id="GO:0003924">
    <property type="term" value="F:GTPase activity"/>
    <property type="evidence" value="ECO:0000318"/>
    <property type="project" value="GO_Central"/>
</dbReference>
<dbReference type="GO" id="GO:0006606">
    <property type="term" value="P:protein import into nucleus"/>
    <property type="evidence" value="ECO:0000318"/>
    <property type="project" value="GO_Central"/>
</dbReference>
<dbReference type="GO" id="GO:0000054">
    <property type="term" value="P:ribosomal subunit export from nucleus"/>
    <property type="evidence" value="ECO:0000318"/>
    <property type="project" value="GO_Central"/>
</dbReference>
<dbReference type="CDD" id="cd00877">
    <property type="entry name" value="Ran"/>
    <property type="match status" value="1"/>
</dbReference>
<dbReference type="FunFam" id="3.40.50.300:FF:000369">
    <property type="entry name" value="GTP-binding nuclear protein"/>
    <property type="match status" value="1"/>
</dbReference>
<dbReference type="Gene3D" id="3.40.50.300">
    <property type="entry name" value="P-loop containing nucleotide triphosphate hydrolases"/>
    <property type="match status" value="1"/>
</dbReference>
<dbReference type="InterPro" id="IPR027417">
    <property type="entry name" value="P-loop_NTPase"/>
</dbReference>
<dbReference type="InterPro" id="IPR002041">
    <property type="entry name" value="Ran_GTPase"/>
</dbReference>
<dbReference type="InterPro" id="IPR005225">
    <property type="entry name" value="Small_GTP-bd"/>
</dbReference>
<dbReference type="InterPro" id="IPR001806">
    <property type="entry name" value="Small_GTPase"/>
</dbReference>
<dbReference type="NCBIfam" id="TIGR00231">
    <property type="entry name" value="small_GTP"/>
    <property type="match status" value="1"/>
</dbReference>
<dbReference type="PANTHER" id="PTHR24071:SF30">
    <property type="entry name" value="GTP-BINDING NUCLEAR PROTEIN RAN-A1"/>
    <property type="match status" value="1"/>
</dbReference>
<dbReference type="PANTHER" id="PTHR24071">
    <property type="entry name" value="RAN GTPASE"/>
    <property type="match status" value="1"/>
</dbReference>
<dbReference type="Pfam" id="PF00071">
    <property type="entry name" value="Ras"/>
    <property type="match status" value="1"/>
</dbReference>
<dbReference type="PRINTS" id="PR00627">
    <property type="entry name" value="GTPRANTC4"/>
</dbReference>
<dbReference type="SMART" id="SM00175">
    <property type="entry name" value="RAB"/>
    <property type="match status" value="1"/>
</dbReference>
<dbReference type="SMART" id="SM00176">
    <property type="entry name" value="RAN"/>
    <property type="match status" value="1"/>
</dbReference>
<dbReference type="SMART" id="SM00173">
    <property type="entry name" value="RAS"/>
    <property type="match status" value="1"/>
</dbReference>
<dbReference type="SMART" id="SM00174">
    <property type="entry name" value="RHO"/>
    <property type="match status" value="1"/>
</dbReference>
<dbReference type="SUPFAM" id="SSF52540">
    <property type="entry name" value="P-loop containing nucleoside triphosphate hydrolases"/>
    <property type="match status" value="1"/>
</dbReference>
<dbReference type="PROSITE" id="PS51418">
    <property type="entry name" value="RAN"/>
    <property type="match status" value="1"/>
</dbReference>
<feature type="chain" id="PRO_0000208725" description="GTP-binding nuclear protein Ran-A1">
    <location>
        <begin position="1"/>
        <end position="221"/>
    </location>
</feature>
<feature type="domain" description="Small GTPase Ran-type" evidence="3">
    <location>
        <begin position="10"/>
        <end position="174"/>
    </location>
</feature>
<feature type="region of interest" description="Switch-I" evidence="3">
    <location>
        <begin position="40"/>
        <end position="48"/>
    </location>
</feature>
<feature type="region of interest" description="Switch-II" evidence="3">
    <location>
        <begin position="71"/>
        <end position="87"/>
    </location>
</feature>
<feature type="region of interest" description="Disordered" evidence="4">
    <location>
        <begin position="199"/>
        <end position="221"/>
    </location>
</feature>
<feature type="compositionally biased region" description="Low complexity" evidence="4">
    <location>
        <begin position="199"/>
        <end position="208"/>
    </location>
</feature>
<feature type="binding site" evidence="2">
    <location>
        <begin position="21"/>
        <end position="28"/>
    </location>
    <ligand>
        <name>GTP</name>
        <dbReference type="ChEBI" id="CHEBI:37565"/>
    </ligand>
</feature>
<feature type="binding site" evidence="2">
    <location>
        <position position="71"/>
    </location>
    <ligand>
        <name>GTP</name>
        <dbReference type="ChEBI" id="CHEBI:37565"/>
    </ligand>
</feature>
<feature type="binding site" evidence="2">
    <location>
        <begin position="125"/>
        <end position="128"/>
    </location>
    <ligand>
        <name>GTP</name>
        <dbReference type="ChEBI" id="CHEBI:37565"/>
    </ligand>
</feature>
<feature type="binding site" evidence="2">
    <location>
        <begin position="153"/>
        <end position="155"/>
    </location>
    <ligand>
        <name>GTP</name>
        <dbReference type="ChEBI" id="CHEBI:37565"/>
    </ligand>
</feature>
<comment type="function">
    <text evidence="1">GTP-binding protein involved in nucleocytoplasmic transport. Required for the import of protein into the nucleus and also for RNA export. Involved in chromatin condensation and control of cell cycle (By similarity).</text>
</comment>
<comment type="subunit">
    <text evidence="2">Found in a nuclear export complex with RanGTP, exportin and pre-miRNA (By similarity).</text>
</comment>
<comment type="subcellular location">
    <subcellularLocation>
        <location evidence="1">Nucleus</location>
    </subcellularLocation>
</comment>
<comment type="similarity">
    <text evidence="3 5">Belongs to the small GTPase superfamily. Ran family.</text>
</comment>
<organism>
    <name type="scientific">Nicotiana tabacum</name>
    <name type="common">Common tobacco</name>
    <dbReference type="NCBI Taxonomy" id="4097"/>
    <lineage>
        <taxon>Eukaryota</taxon>
        <taxon>Viridiplantae</taxon>
        <taxon>Streptophyta</taxon>
        <taxon>Embryophyta</taxon>
        <taxon>Tracheophyta</taxon>
        <taxon>Spermatophyta</taxon>
        <taxon>Magnoliopsida</taxon>
        <taxon>eudicotyledons</taxon>
        <taxon>Gunneridae</taxon>
        <taxon>Pentapetalae</taxon>
        <taxon>asterids</taxon>
        <taxon>lamiids</taxon>
        <taxon>Solanales</taxon>
        <taxon>Solanaceae</taxon>
        <taxon>Nicotianoideae</taxon>
        <taxon>Nicotianeae</taxon>
        <taxon>Nicotiana</taxon>
    </lineage>
</organism>
<evidence type="ECO:0000250" key="1"/>
<evidence type="ECO:0000250" key="2">
    <source>
        <dbReference type="UniProtKB" id="P62825"/>
    </source>
</evidence>
<evidence type="ECO:0000255" key="3">
    <source>
        <dbReference type="PROSITE-ProRule" id="PRU00752"/>
    </source>
</evidence>
<evidence type="ECO:0000256" key="4">
    <source>
        <dbReference type="SAM" id="MobiDB-lite"/>
    </source>
</evidence>
<evidence type="ECO:0000305" key="5"/>
<name>RANA1_TOBAC</name>
<gene>
    <name type="primary">RAN-A1</name>
</gene>
<protein>
    <recommendedName>
        <fullName>GTP-binding nuclear protein Ran-A1</fullName>
    </recommendedName>
</protein>
<sequence length="221" mass="25018">MALPGQQAVDYPSFKLVIVGDGGTGKTTFVKRHLTGEFEKKYEPTIGVEVHPLDFFTNCGKIRFYCWDTAGQEKFGGLRDGYYIHGQCAIIMFDVTARLTYKNVPTWHRDLCRVCENIPIVLCGNKVDVKNRQVKAKQVTFHRKKNLQYYEISAKSNYNFEKPFLYLARKLAGDPNLHFVESPALAPPEVQIDLAAQQQHEAELAAAASQPLPDDDDETFD</sequence>
<reference key="1">
    <citation type="journal article" date="1994" name="Plant J.">
        <title>Phenotype of the fission yeast cell cycle regulatory mutant pim1-46 is suppressed by a tobacco cDNA encoding a small, Ran-like GTP-binding protein.</title>
        <authorList>
            <person name="Merkle T."/>
            <person name="Haizel T."/>
            <person name="Matsumoto T."/>
            <person name="Harter K."/>
            <person name="Dallmann G."/>
            <person name="Nagy F."/>
        </authorList>
    </citation>
    <scope>NUCLEOTIDE SEQUENCE [MRNA]</scope>
    <source>
        <strain>cv. SR1</strain>
    </source>
</reference>
<proteinExistence type="evidence at transcript level"/>